<organism>
    <name type="scientific">Aeromonas hydrophila subsp. hydrophila (strain ATCC 7966 / DSM 30187 / BCRC 13018 / CCUG 14551 / JCM 1027 / KCTC 2358 / NCIMB 9240 / NCTC 8049)</name>
    <dbReference type="NCBI Taxonomy" id="380703"/>
    <lineage>
        <taxon>Bacteria</taxon>
        <taxon>Pseudomonadati</taxon>
        <taxon>Pseudomonadota</taxon>
        <taxon>Gammaproteobacteria</taxon>
        <taxon>Aeromonadales</taxon>
        <taxon>Aeromonadaceae</taxon>
        <taxon>Aeromonas</taxon>
    </lineage>
</organism>
<reference key="1">
    <citation type="journal article" date="2006" name="J. Bacteriol.">
        <title>Genome sequence of Aeromonas hydrophila ATCC 7966T: jack of all trades.</title>
        <authorList>
            <person name="Seshadri R."/>
            <person name="Joseph S.W."/>
            <person name="Chopra A.K."/>
            <person name="Sha J."/>
            <person name="Shaw J."/>
            <person name="Graf J."/>
            <person name="Haft D.H."/>
            <person name="Wu M."/>
            <person name="Ren Q."/>
            <person name="Rosovitz M.J."/>
            <person name="Madupu R."/>
            <person name="Tallon L."/>
            <person name="Kim M."/>
            <person name="Jin S."/>
            <person name="Vuong H."/>
            <person name="Stine O.C."/>
            <person name="Ali A."/>
            <person name="Horneman A.J."/>
            <person name="Heidelberg J.F."/>
        </authorList>
    </citation>
    <scope>NUCLEOTIDE SEQUENCE [LARGE SCALE GENOMIC DNA]</scope>
    <source>
        <strain>ATCC 7966 / DSM 30187 / BCRC 13018 / CCUG 14551 / JCM 1027 / KCTC 2358 / NCIMB 9240 / NCTC 8049</strain>
    </source>
</reference>
<evidence type="ECO:0000255" key="1">
    <source>
        <dbReference type="HAMAP-Rule" id="MF_00113"/>
    </source>
</evidence>
<feature type="chain" id="PRO_1000015171" description="S-adenosylmethionine:tRNA ribosyltransferase-isomerase">
    <location>
        <begin position="1"/>
        <end position="355"/>
    </location>
</feature>
<sequence>MQVSDFHFDLPDELIARYPMTERTASRLLQLDGQTGALRHGQFVDVLDQLNPGDLLVFNNTRVIPARMFGQKASGGKLEVLVERMLDEHSVLAHVRSSKSPKPGTRLILDGGADGEKVEAEMRARHDALFEIHFLDPRPVLEILEAIGHMPLPPYIDRPDEDADKERYQTVYNQKPGAVAAPTAGLHFDEPLLEKIRAKGVETAFVTLHVGAGTFQPVRVDKIEDHHMHSEYAEVPQEVVDAIAATRARGGRVIAVGTTSVRSLESAAKVTLAQGKPLAPFFSDTDIFIFPGYQFQVVDAMVTNFHLPESTLIMLVSAFAGYDNVMSAYQAAVAEQYRFFSYGDAMFVTRRRAQA</sequence>
<keyword id="KW-0963">Cytoplasm</keyword>
<keyword id="KW-0671">Queuosine biosynthesis</keyword>
<keyword id="KW-1185">Reference proteome</keyword>
<keyword id="KW-0949">S-adenosyl-L-methionine</keyword>
<keyword id="KW-0808">Transferase</keyword>
<name>QUEA_AERHH</name>
<proteinExistence type="inferred from homology"/>
<gene>
    <name evidence="1" type="primary">queA</name>
    <name type="ordered locus">AHA_1734</name>
</gene>
<comment type="function">
    <text evidence="1">Transfers and isomerizes the ribose moiety from AdoMet to the 7-aminomethyl group of 7-deazaguanine (preQ1-tRNA) to give epoxyqueuosine (oQ-tRNA).</text>
</comment>
<comment type="catalytic activity">
    <reaction evidence="1">
        <text>7-aminomethyl-7-carbaguanosine(34) in tRNA + S-adenosyl-L-methionine = epoxyqueuosine(34) in tRNA + adenine + L-methionine + 2 H(+)</text>
        <dbReference type="Rhea" id="RHEA:32155"/>
        <dbReference type="Rhea" id="RHEA-COMP:10342"/>
        <dbReference type="Rhea" id="RHEA-COMP:18582"/>
        <dbReference type="ChEBI" id="CHEBI:15378"/>
        <dbReference type="ChEBI" id="CHEBI:16708"/>
        <dbReference type="ChEBI" id="CHEBI:57844"/>
        <dbReference type="ChEBI" id="CHEBI:59789"/>
        <dbReference type="ChEBI" id="CHEBI:82833"/>
        <dbReference type="ChEBI" id="CHEBI:194443"/>
        <dbReference type="EC" id="2.4.99.17"/>
    </reaction>
</comment>
<comment type="pathway">
    <text evidence="1">tRNA modification; tRNA-queuosine biosynthesis.</text>
</comment>
<comment type="subunit">
    <text evidence="1">Monomer.</text>
</comment>
<comment type="subcellular location">
    <subcellularLocation>
        <location evidence="1">Cytoplasm</location>
    </subcellularLocation>
</comment>
<comment type="similarity">
    <text evidence="1">Belongs to the QueA family.</text>
</comment>
<dbReference type="EC" id="2.4.99.17" evidence="1"/>
<dbReference type="EMBL" id="CP000462">
    <property type="protein sequence ID" value="ABK39787.1"/>
    <property type="molecule type" value="Genomic_DNA"/>
</dbReference>
<dbReference type="RefSeq" id="WP_011705623.1">
    <property type="nucleotide sequence ID" value="NC_008570.1"/>
</dbReference>
<dbReference type="RefSeq" id="YP_856270.1">
    <property type="nucleotide sequence ID" value="NC_008570.1"/>
</dbReference>
<dbReference type="SMR" id="A0KJ19"/>
<dbReference type="STRING" id="380703.AHA_1734"/>
<dbReference type="EnsemblBacteria" id="ABK39787">
    <property type="protein sequence ID" value="ABK39787"/>
    <property type="gene ID" value="AHA_1734"/>
</dbReference>
<dbReference type="GeneID" id="4490303"/>
<dbReference type="KEGG" id="aha:AHA_1734"/>
<dbReference type="PATRIC" id="fig|380703.7.peg.1749"/>
<dbReference type="eggNOG" id="COG0809">
    <property type="taxonomic scope" value="Bacteria"/>
</dbReference>
<dbReference type="HOGENOM" id="CLU_039110_1_0_6"/>
<dbReference type="OrthoDB" id="9805933at2"/>
<dbReference type="UniPathway" id="UPA00392"/>
<dbReference type="Proteomes" id="UP000000756">
    <property type="component" value="Chromosome"/>
</dbReference>
<dbReference type="GO" id="GO:0005737">
    <property type="term" value="C:cytoplasm"/>
    <property type="evidence" value="ECO:0007669"/>
    <property type="project" value="UniProtKB-SubCell"/>
</dbReference>
<dbReference type="GO" id="GO:0051075">
    <property type="term" value="F:S-adenosylmethionine:tRNA ribosyltransferase-isomerase activity"/>
    <property type="evidence" value="ECO:0007669"/>
    <property type="project" value="UniProtKB-EC"/>
</dbReference>
<dbReference type="GO" id="GO:0008616">
    <property type="term" value="P:queuosine biosynthetic process"/>
    <property type="evidence" value="ECO:0007669"/>
    <property type="project" value="UniProtKB-UniRule"/>
</dbReference>
<dbReference type="GO" id="GO:0002099">
    <property type="term" value="P:tRNA wobble guanine modification"/>
    <property type="evidence" value="ECO:0007669"/>
    <property type="project" value="TreeGrafter"/>
</dbReference>
<dbReference type="FunFam" id="2.40.10.240:FF:000001">
    <property type="entry name" value="S-adenosylmethionine:tRNA ribosyltransferase-isomerase"/>
    <property type="match status" value="1"/>
</dbReference>
<dbReference type="FunFam" id="3.40.1780.10:FF:000001">
    <property type="entry name" value="S-adenosylmethionine:tRNA ribosyltransferase-isomerase"/>
    <property type="match status" value="1"/>
</dbReference>
<dbReference type="Gene3D" id="2.40.10.240">
    <property type="entry name" value="QueA-like"/>
    <property type="match status" value="1"/>
</dbReference>
<dbReference type="Gene3D" id="3.40.1780.10">
    <property type="entry name" value="QueA-like"/>
    <property type="match status" value="1"/>
</dbReference>
<dbReference type="HAMAP" id="MF_00113">
    <property type="entry name" value="QueA"/>
    <property type="match status" value="1"/>
</dbReference>
<dbReference type="InterPro" id="IPR003699">
    <property type="entry name" value="QueA"/>
</dbReference>
<dbReference type="InterPro" id="IPR042118">
    <property type="entry name" value="QueA_dom1"/>
</dbReference>
<dbReference type="InterPro" id="IPR042119">
    <property type="entry name" value="QueA_dom2"/>
</dbReference>
<dbReference type="InterPro" id="IPR036100">
    <property type="entry name" value="QueA_sf"/>
</dbReference>
<dbReference type="NCBIfam" id="NF001140">
    <property type="entry name" value="PRK00147.1"/>
    <property type="match status" value="1"/>
</dbReference>
<dbReference type="NCBIfam" id="TIGR00113">
    <property type="entry name" value="queA"/>
    <property type="match status" value="1"/>
</dbReference>
<dbReference type="PANTHER" id="PTHR30307">
    <property type="entry name" value="S-ADENOSYLMETHIONINE:TRNA RIBOSYLTRANSFERASE-ISOMERASE"/>
    <property type="match status" value="1"/>
</dbReference>
<dbReference type="PANTHER" id="PTHR30307:SF0">
    <property type="entry name" value="S-ADENOSYLMETHIONINE:TRNA RIBOSYLTRANSFERASE-ISOMERASE"/>
    <property type="match status" value="1"/>
</dbReference>
<dbReference type="Pfam" id="PF02547">
    <property type="entry name" value="Queuosine_synth"/>
    <property type="match status" value="1"/>
</dbReference>
<dbReference type="SUPFAM" id="SSF111337">
    <property type="entry name" value="QueA-like"/>
    <property type="match status" value="1"/>
</dbReference>
<protein>
    <recommendedName>
        <fullName evidence="1">S-adenosylmethionine:tRNA ribosyltransferase-isomerase</fullName>
        <ecNumber evidence="1">2.4.99.17</ecNumber>
    </recommendedName>
    <alternativeName>
        <fullName evidence="1">Queuosine biosynthesis protein QueA</fullName>
    </alternativeName>
</protein>
<accession>A0KJ19</accession>